<name>PSBJ_PROM0</name>
<comment type="function">
    <text evidence="1">One of the components of the core complex of photosystem II (PSII). PSII is a light-driven water:plastoquinone oxidoreductase that uses light energy to abstract electrons from H(2)O, generating O(2) and a proton gradient subsequently used for ATP formation. It consists of a core antenna complex that captures photons, and an electron transfer chain that converts photonic excitation into a charge separation.</text>
</comment>
<comment type="subunit">
    <text evidence="2">PSII is composed of 1 copy each of membrane proteins PsbA, PsbB, PsbC, PsbD, PsbE, PsbF, PsbH, PsbI, PsbJ, PsbK, PsbL, PsbM, PsbT, PsbX, PsbY, Psb30/Ycf12, peripheral proteins PsbO, CyanoQ (PsbQ), PsbU, PsbV and a large number of cofactors. It forms dimeric complexes.</text>
</comment>
<comment type="subcellular location">
    <subcellularLocation>
        <location evidence="1">Cellular thylakoid membrane</location>
        <topology evidence="1">Single-pass membrane protein</topology>
    </subcellularLocation>
</comment>
<comment type="similarity">
    <text evidence="1">Belongs to the PsbJ family.</text>
</comment>
<keyword id="KW-0472">Membrane</keyword>
<keyword id="KW-0602">Photosynthesis</keyword>
<keyword id="KW-0604">Photosystem II</keyword>
<keyword id="KW-0674">Reaction center</keyword>
<keyword id="KW-1185">Reference proteome</keyword>
<keyword id="KW-0793">Thylakoid</keyword>
<keyword id="KW-0812">Transmembrane</keyword>
<keyword id="KW-1133">Transmembrane helix</keyword>
<sequence>MSKLKGPDGRIPDRLPDGRPAVAWERRWTEGTLPLWLVATAGGIAVIFVLGIFFYGSYQGVGAGG</sequence>
<gene>
    <name evidence="1" type="primary">psbJ</name>
    <name type="ordered locus">P9301_03241</name>
</gene>
<reference key="1">
    <citation type="journal article" date="2007" name="PLoS Genet.">
        <title>Patterns and implications of gene gain and loss in the evolution of Prochlorococcus.</title>
        <authorList>
            <person name="Kettler G.C."/>
            <person name="Martiny A.C."/>
            <person name="Huang K."/>
            <person name="Zucker J."/>
            <person name="Coleman M.L."/>
            <person name="Rodrigue S."/>
            <person name="Chen F."/>
            <person name="Lapidus A."/>
            <person name="Ferriera S."/>
            <person name="Johnson J."/>
            <person name="Steglich C."/>
            <person name="Church G.M."/>
            <person name="Richardson P."/>
            <person name="Chisholm S.W."/>
        </authorList>
    </citation>
    <scope>NUCLEOTIDE SEQUENCE [LARGE SCALE GENOMIC DNA]</scope>
    <source>
        <strain>MIT 9301</strain>
    </source>
</reference>
<organism>
    <name type="scientific">Prochlorococcus marinus (strain MIT 9301)</name>
    <dbReference type="NCBI Taxonomy" id="167546"/>
    <lineage>
        <taxon>Bacteria</taxon>
        <taxon>Bacillati</taxon>
        <taxon>Cyanobacteriota</taxon>
        <taxon>Cyanophyceae</taxon>
        <taxon>Synechococcales</taxon>
        <taxon>Prochlorococcaceae</taxon>
        <taxon>Prochlorococcus</taxon>
    </lineage>
</organism>
<protein>
    <recommendedName>
        <fullName evidence="1">Photosystem II reaction center protein J</fullName>
        <shortName evidence="1">PSII-J</shortName>
    </recommendedName>
</protein>
<evidence type="ECO:0000255" key="1">
    <source>
        <dbReference type="HAMAP-Rule" id="MF_01305"/>
    </source>
</evidence>
<evidence type="ECO:0000305" key="2"/>
<proteinExistence type="inferred from homology"/>
<feature type="chain" id="PRO_0000292227" description="Photosystem II reaction center protein J">
    <location>
        <begin position="1"/>
        <end position="65"/>
    </location>
</feature>
<feature type="transmembrane region" description="Helical" evidence="1">
    <location>
        <begin position="35"/>
        <end position="55"/>
    </location>
</feature>
<accession>A3PB22</accession>
<dbReference type="EMBL" id="CP000576">
    <property type="protein sequence ID" value="ABO16947.1"/>
    <property type="molecule type" value="Genomic_DNA"/>
</dbReference>
<dbReference type="RefSeq" id="WP_011375864.1">
    <property type="nucleotide sequence ID" value="NC_009091.1"/>
</dbReference>
<dbReference type="SMR" id="A3PB22"/>
<dbReference type="STRING" id="167546.P9301_03241"/>
<dbReference type="KEGG" id="pmg:P9301_03241"/>
<dbReference type="eggNOG" id="ENOG5030SSF">
    <property type="taxonomic scope" value="Bacteria"/>
</dbReference>
<dbReference type="HOGENOM" id="CLU_2829784_0_0_3"/>
<dbReference type="OrthoDB" id="466474at2"/>
<dbReference type="Proteomes" id="UP000001430">
    <property type="component" value="Chromosome"/>
</dbReference>
<dbReference type="GO" id="GO:0009539">
    <property type="term" value="C:photosystem II reaction center"/>
    <property type="evidence" value="ECO:0007669"/>
    <property type="project" value="InterPro"/>
</dbReference>
<dbReference type="GO" id="GO:0031676">
    <property type="term" value="C:plasma membrane-derived thylakoid membrane"/>
    <property type="evidence" value="ECO:0007669"/>
    <property type="project" value="UniProtKB-SubCell"/>
</dbReference>
<dbReference type="GO" id="GO:0015979">
    <property type="term" value="P:photosynthesis"/>
    <property type="evidence" value="ECO:0007669"/>
    <property type="project" value="UniProtKB-UniRule"/>
</dbReference>
<dbReference type="Gene3D" id="6.10.250.2070">
    <property type="match status" value="1"/>
</dbReference>
<dbReference type="HAMAP" id="MF_01305">
    <property type="entry name" value="PSII_PsbJ"/>
    <property type="match status" value="1"/>
</dbReference>
<dbReference type="InterPro" id="IPR002682">
    <property type="entry name" value="PSII_PsbJ"/>
</dbReference>
<dbReference type="InterPro" id="IPR037267">
    <property type="entry name" value="PSII_PsbJ_sf"/>
</dbReference>
<dbReference type="NCBIfam" id="NF002722">
    <property type="entry name" value="PRK02565.1"/>
    <property type="match status" value="1"/>
</dbReference>
<dbReference type="PANTHER" id="PTHR34812">
    <property type="entry name" value="PHOTOSYSTEM II REACTION CENTER PROTEIN J"/>
    <property type="match status" value="1"/>
</dbReference>
<dbReference type="PANTHER" id="PTHR34812:SF3">
    <property type="entry name" value="PHOTOSYSTEM II REACTION CENTER PROTEIN J"/>
    <property type="match status" value="1"/>
</dbReference>
<dbReference type="Pfam" id="PF01788">
    <property type="entry name" value="PsbJ"/>
    <property type="match status" value="1"/>
</dbReference>
<dbReference type="SUPFAM" id="SSF161021">
    <property type="entry name" value="Photosystem II reaction center protein J, PsbJ"/>
    <property type="match status" value="1"/>
</dbReference>